<gene>
    <name evidence="1" type="primary">rplL</name>
    <name type="ordered locus">Oant_1946</name>
</gene>
<accession>A6X0A8</accession>
<name>RL7_BRUA4</name>
<reference key="1">
    <citation type="journal article" date="2011" name="J. Bacteriol.">
        <title>Genome of Ochrobactrum anthropi ATCC 49188 T, a versatile opportunistic pathogen and symbiont of several eukaryotic hosts.</title>
        <authorList>
            <person name="Chain P.S."/>
            <person name="Lang D.M."/>
            <person name="Comerci D.J."/>
            <person name="Malfatti S.A."/>
            <person name="Vergez L.M."/>
            <person name="Shin M."/>
            <person name="Ugalde R.A."/>
            <person name="Garcia E."/>
            <person name="Tolmasky M.E."/>
        </authorList>
    </citation>
    <scope>NUCLEOTIDE SEQUENCE [LARGE SCALE GENOMIC DNA]</scope>
    <source>
        <strain>ATCC 49188 / DSM 6882 / CCUG 24695 / JCM 21032 / LMG 3331 / NBRC 15819 / NCTC 12168 / Alc 37</strain>
    </source>
</reference>
<evidence type="ECO:0000255" key="1">
    <source>
        <dbReference type="HAMAP-Rule" id="MF_00368"/>
    </source>
</evidence>
<evidence type="ECO:0000305" key="2"/>
<comment type="function">
    <text evidence="1">Forms part of the ribosomal stalk which helps the ribosome interact with GTP-bound translation factors. Is thus essential for accurate translation.</text>
</comment>
<comment type="subunit">
    <text evidence="1">Homodimer. Part of the ribosomal stalk of the 50S ribosomal subunit. Forms a multimeric L10(L12)X complex, where L10 forms an elongated spine to which 2 to 4 L12 dimers bind in a sequential fashion. Binds GTP-bound translation factors.</text>
</comment>
<comment type="similarity">
    <text evidence="1">Belongs to the bacterial ribosomal protein bL12 family.</text>
</comment>
<sequence>MADLAKIVDDLSALTVLEAAELSKLLEEKWGVSAAAPVAVAAAGGAAPAAAAEEKTEFDVVLADGGANKINVIKEVRAITGLGLKEAKDLVEGAPKAVKEGASKDEAEKIKAQLEAAGAKVELK</sequence>
<keyword id="KW-1185">Reference proteome</keyword>
<keyword id="KW-0687">Ribonucleoprotein</keyword>
<keyword id="KW-0689">Ribosomal protein</keyword>
<feature type="chain" id="PRO_1000007048" description="Large ribosomal subunit protein bL12">
    <location>
        <begin position="1"/>
        <end position="124"/>
    </location>
</feature>
<organism>
    <name type="scientific">Brucella anthropi (strain ATCC 49188 / DSM 6882 / CCUG 24695 / JCM 21032 / LMG 3331 / NBRC 15819 / NCTC 12168 / Alc 37)</name>
    <name type="common">Ochrobactrum anthropi</name>
    <dbReference type="NCBI Taxonomy" id="439375"/>
    <lineage>
        <taxon>Bacteria</taxon>
        <taxon>Pseudomonadati</taxon>
        <taxon>Pseudomonadota</taxon>
        <taxon>Alphaproteobacteria</taxon>
        <taxon>Hyphomicrobiales</taxon>
        <taxon>Brucellaceae</taxon>
        <taxon>Brucella/Ochrobactrum group</taxon>
        <taxon>Brucella</taxon>
    </lineage>
</organism>
<protein>
    <recommendedName>
        <fullName evidence="1">Large ribosomal subunit protein bL12</fullName>
    </recommendedName>
    <alternativeName>
        <fullName evidence="2">50S ribosomal protein L7/L12</fullName>
    </alternativeName>
</protein>
<dbReference type="EMBL" id="CP000758">
    <property type="protein sequence ID" value="ABS14662.1"/>
    <property type="molecule type" value="Genomic_DNA"/>
</dbReference>
<dbReference type="RefSeq" id="WP_010659906.1">
    <property type="nucleotide sequence ID" value="NC_009667.1"/>
</dbReference>
<dbReference type="SMR" id="A6X0A8"/>
<dbReference type="STRING" id="439375.Oant_1946"/>
<dbReference type="GeneID" id="61317595"/>
<dbReference type="KEGG" id="oan:Oant_1946"/>
<dbReference type="eggNOG" id="COG0222">
    <property type="taxonomic scope" value="Bacteria"/>
</dbReference>
<dbReference type="HOGENOM" id="CLU_086499_3_0_5"/>
<dbReference type="PhylomeDB" id="A6X0A8"/>
<dbReference type="Proteomes" id="UP000002301">
    <property type="component" value="Chromosome 1"/>
</dbReference>
<dbReference type="GO" id="GO:0022625">
    <property type="term" value="C:cytosolic large ribosomal subunit"/>
    <property type="evidence" value="ECO:0007669"/>
    <property type="project" value="TreeGrafter"/>
</dbReference>
<dbReference type="GO" id="GO:0003729">
    <property type="term" value="F:mRNA binding"/>
    <property type="evidence" value="ECO:0007669"/>
    <property type="project" value="TreeGrafter"/>
</dbReference>
<dbReference type="GO" id="GO:0003735">
    <property type="term" value="F:structural constituent of ribosome"/>
    <property type="evidence" value="ECO:0007669"/>
    <property type="project" value="InterPro"/>
</dbReference>
<dbReference type="GO" id="GO:0006412">
    <property type="term" value="P:translation"/>
    <property type="evidence" value="ECO:0007669"/>
    <property type="project" value="UniProtKB-UniRule"/>
</dbReference>
<dbReference type="CDD" id="cd00387">
    <property type="entry name" value="Ribosomal_L7_L12"/>
    <property type="match status" value="1"/>
</dbReference>
<dbReference type="FunFam" id="3.30.1390.10:FF:000001">
    <property type="entry name" value="50S ribosomal protein L7/L12"/>
    <property type="match status" value="1"/>
</dbReference>
<dbReference type="Gene3D" id="3.30.1390.10">
    <property type="match status" value="1"/>
</dbReference>
<dbReference type="Gene3D" id="1.20.5.710">
    <property type="entry name" value="Single helix bin"/>
    <property type="match status" value="1"/>
</dbReference>
<dbReference type="HAMAP" id="MF_00368">
    <property type="entry name" value="Ribosomal_bL12"/>
    <property type="match status" value="1"/>
</dbReference>
<dbReference type="InterPro" id="IPR000206">
    <property type="entry name" value="Ribosomal_bL12"/>
</dbReference>
<dbReference type="InterPro" id="IPR013823">
    <property type="entry name" value="Ribosomal_bL12_C"/>
</dbReference>
<dbReference type="InterPro" id="IPR014719">
    <property type="entry name" value="Ribosomal_bL12_C/ClpS-like"/>
</dbReference>
<dbReference type="InterPro" id="IPR008932">
    <property type="entry name" value="Ribosomal_bL12_oligo"/>
</dbReference>
<dbReference type="InterPro" id="IPR036235">
    <property type="entry name" value="Ribosomal_bL12_oligo_N_sf"/>
</dbReference>
<dbReference type="NCBIfam" id="TIGR00855">
    <property type="entry name" value="L12"/>
    <property type="match status" value="1"/>
</dbReference>
<dbReference type="PANTHER" id="PTHR45987">
    <property type="entry name" value="39S RIBOSOMAL PROTEIN L12"/>
    <property type="match status" value="1"/>
</dbReference>
<dbReference type="PANTHER" id="PTHR45987:SF4">
    <property type="entry name" value="LARGE RIBOSOMAL SUBUNIT PROTEIN BL12M"/>
    <property type="match status" value="1"/>
</dbReference>
<dbReference type="Pfam" id="PF00542">
    <property type="entry name" value="Ribosomal_L12"/>
    <property type="match status" value="1"/>
</dbReference>
<dbReference type="Pfam" id="PF16320">
    <property type="entry name" value="Ribosomal_L12_N"/>
    <property type="match status" value="1"/>
</dbReference>
<dbReference type="SUPFAM" id="SSF54736">
    <property type="entry name" value="ClpS-like"/>
    <property type="match status" value="1"/>
</dbReference>
<dbReference type="SUPFAM" id="SSF48300">
    <property type="entry name" value="Ribosomal protein L7/12, oligomerisation (N-terminal) domain"/>
    <property type="match status" value="1"/>
</dbReference>
<proteinExistence type="inferred from homology"/>